<protein>
    <recommendedName>
        <fullName>Nephrin</fullName>
    </recommendedName>
    <alternativeName>
        <fullName>Renal glomerulus-specific cell adhesion receptor</fullName>
    </alternativeName>
</protein>
<keyword id="KW-0025">Alternative splicing</keyword>
<keyword id="KW-0130">Cell adhesion</keyword>
<keyword id="KW-1003">Cell membrane</keyword>
<keyword id="KW-0217">Developmental protein</keyword>
<keyword id="KW-1015">Disulfide bond</keyword>
<keyword id="KW-0325">Glycoprotein</keyword>
<keyword id="KW-0393">Immunoglobulin domain</keyword>
<keyword id="KW-0472">Membrane</keyword>
<keyword id="KW-0517">Myogenesis</keyword>
<keyword id="KW-0597">Phosphoprotein</keyword>
<keyword id="KW-1185">Reference proteome</keyword>
<keyword id="KW-0677">Repeat</keyword>
<keyword id="KW-0732">Signal</keyword>
<keyword id="KW-0812">Transmembrane</keyword>
<keyword id="KW-1133">Transmembrane helix</keyword>
<evidence type="ECO:0000250" key="1">
    <source>
        <dbReference type="UniProtKB" id="O60500"/>
    </source>
</evidence>
<evidence type="ECO:0000250" key="2">
    <source>
        <dbReference type="UniProtKB" id="Q9QZS7"/>
    </source>
</evidence>
<evidence type="ECO:0000255" key="3"/>
<evidence type="ECO:0000255" key="4">
    <source>
        <dbReference type="PROSITE-ProRule" id="PRU00114"/>
    </source>
</evidence>
<evidence type="ECO:0000255" key="5">
    <source>
        <dbReference type="PROSITE-ProRule" id="PRU00316"/>
    </source>
</evidence>
<evidence type="ECO:0000256" key="6">
    <source>
        <dbReference type="SAM" id="MobiDB-lite"/>
    </source>
</evidence>
<evidence type="ECO:0000269" key="7">
    <source>
    </source>
</evidence>
<evidence type="ECO:0000269" key="8">
    <source>
    </source>
</evidence>
<evidence type="ECO:0000269" key="9">
    <source>
    </source>
</evidence>
<evidence type="ECO:0000269" key="10">
    <source>
    </source>
</evidence>
<evidence type="ECO:0000269" key="11">
    <source>
    </source>
</evidence>
<evidence type="ECO:0000269" key="12">
    <source>
    </source>
</evidence>
<evidence type="ECO:0000269" key="13">
    <source>
    </source>
</evidence>
<evidence type="ECO:0000269" key="14">
    <source>
    </source>
</evidence>
<evidence type="ECO:0000303" key="15">
    <source>
    </source>
</evidence>
<evidence type="ECO:0000305" key="16"/>
<evidence type="ECO:0007744" key="17">
    <source>
    </source>
</evidence>
<dbReference type="EMBL" id="AF172255">
    <property type="protein sequence ID" value="AAF91086.1"/>
    <property type="molecule type" value="mRNA"/>
</dbReference>
<dbReference type="EMBL" id="AF161715">
    <property type="protein sequence ID" value="AAF14884.1"/>
    <property type="molecule type" value="mRNA"/>
</dbReference>
<dbReference type="EMBL" id="AF125521">
    <property type="protein sequence ID" value="AAF12734.1"/>
    <property type="molecule type" value="mRNA"/>
</dbReference>
<dbReference type="RefSeq" id="NP_072150.1">
    <property type="nucleotide sequence ID" value="NM_022628.1"/>
</dbReference>
<dbReference type="BioGRID" id="249144">
    <property type="interactions" value="8"/>
</dbReference>
<dbReference type="CORUM" id="Q9R044"/>
<dbReference type="FunCoup" id="Q9R044">
    <property type="interactions" value="164"/>
</dbReference>
<dbReference type="IntAct" id="Q9R044">
    <property type="interactions" value="1"/>
</dbReference>
<dbReference type="MINT" id="Q9R044"/>
<dbReference type="STRING" id="10116.ENSRNOP00000049922"/>
<dbReference type="GlyCosmos" id="Q9R044">
    <property type="glycosylation" value="6 sites, No reported glycans"/>
</dbReference>
<dbReference type="GlyGen" id="Q9R044">
    <property type="glycosylation" value="6 sites"/>
</dbReference>
<dbReference type="iPTMnet" id="Q9R044"/>
<dbReference type="PhosphoSitePlus" id="Q9R044"/>
<dbReference type="PaxDb" id="10116-ENSRNOP00000049922"/>
<dbReference type="GeneID" id="64563"/>
<dbReference type="KEGG" id="rno:64563"/>
<dbReference type="UCSC" id="RGD:620460">
    <molecule id="Q9R044-1"/>
    <property type="organism name" value="rat"/>
</dbReference>
<dbReference type="AGR" id="RGD:620460"/>
<dbReference type="CTD" id="4868"/>
<dbReference type="RGD" id="620460">
    <property type="gene designation" value="Nphs1"/>
</dbReference>
<dbReference type="eggNOG" id="KOG3515">
    <property type="taxonomic scope" value="Eukaryota"/>
</dbReference>
<dbReference type="InParanoid" id="Q9R044"/>
<dbReference type="OrthoDB" id="10006996at2759"/>
<dbReference type="PhylomeDB" id="Q9R044"/>
<dbReference type="Reactome" id="R-RNO-373753">
    <property type="pathway name" value="Nephrin family interactions"/>
</dbReference>
<dbReference type="PRO" id="PR:Q9R044"/>
<dbReference type="Proteomes" id="UP000002494">
    <property type="component" value="Unplaced"/>
</dbReference>
<dbReference type="GO" id="GO:0005604">
    <property type="term" value="C:basement membrane"/>
    <property type="evidence" value="ECO:0000314"/>
    <property type="project" value="RGD"/>
</dbReference>
<dbReference type="GO" id="GO:0071944">
    <property type="term" value="C:cell periphery"/>
    <property type="evidence" value="ECO:0000266"/>
    <property type="project" value="RGD"/>
</dbReference>
<dbReference type="GO" id="GO:0042995">
    <property type="term" value="C:cell projection"/>
    <property type="evidence" value="ECO:0000266"/>
    <property type="project" value="RGD"/>
</dbReference>
<dbReference type="GO" id="GO:0005911">
    <property type="term" value="C:cell-cell junction"/>
    <property type="evidence" value="ECO:0000318"/>
    <property type="project" value="GO_Central"/>
</dbReference>
<dbReference type="GO" id="GO:0005925">
    <property type="term" value="C:focal adhesion"/>
    <property type="evidence" value="ECO:0000266"/>
    <property type="project" value="RGD"/>
</dbReference>
<dbReference type="GO" id="GO:0005886">
    <property type="term" value="C:plasma membrane"/>
    <property type="evidence" value="ECO:0000314"/>
    <property type="project" value="UniProtKB"/>
</dbReference>
<dbReference type="GO" id="GO:0032991">
    <property type="term" value="C:protein-containing complex"/>
    <property type="evidence" value="ECO:0000314"/>
    <property type="project" value="RGD"/>
</dbReference>
<dbReference type="GO" id="GO:0036057">
    <property type="term" value="C:slit diaphragm"/>
    <property type="evidence" value="ECO:0000314"/>
    <property type="project" value="UniProtKB"/>
</dbReference>
<dbReference type="GO" id="GO:0051393">
    <property type="term" value="F:alpha-actinin binding"/>
    <property type="evidence" value="ECO:0000353"/>
    <property type="project" value="RGD"/>
</dbReference>
<dbReference type="GO" id="GO:0050839">
    <property type="term" value="F:cell adhesion molecule binding"/>
    <property type="evidence" value="ECO:0000318"/>
    <property type="project" value="GO_Central"/>
</dbReference>
<dbReference type="GO" id="GO:0019904">
    <property type="term" value="F:protein domain specific binding"/>
    <property type="evidence" value="ECO:0000353"/>
    <property type="project" value="RGD"/>
</dbReference>
<dbReference type="GO" id="GO:0030507">
    <property type="term" value="F:spectrin binding"/>
    <property type="evidence" value="ECO:0000353"/>
    <property type="project" value="RGD"/>
</dbReference>
<dbReference type="GO" id="GO:0007155">
    <property type="term" value="P:cell adhesion"/>
    <property type="evidence" value="ECO:0000266"/>
    <property type="project" value="RGD"/>
</dbReference>
<dbReference type="GO" id="GO:0098609">
    <property type="term" value="P:cell-cell adhesion"/>
    <property type="evidence" value="ECO:0000318"/>
    <property type="project" value="GO_Central"/>
</dbReference>
<dbReference type="GO" id="GO:0010467">
    <property type="term" value="P:gene expression"/>
    <property type="evidence" value="ECO:0000266"/>
    <property type="project" value="RGD"/>
</dbReference>
<dbReference type="GO" id="GO:0003094">
    <property type="term" value="P:glomerular filtration"/>
    <property type="evidence" value="ECO:0000305"/>
    <property type="project" value="UniProtKB"/>
</dbReference>
<dbReference type="GO" id="GO:0007254">
    <property type="term" value="P:JNK cascade"/>
    <property type="evidence" value="ECO:0000266"/>
    <property type="project" value="RGD"/>
</dbReference>
<dbReference type="GO" id="GO:0000165">
    <property type="term" value="P:MAPK cascade"/>
    <property type="evidence" value="ECO:0000266"/>
    <property type="project" value="RGD"/>
</dbReference>
<dbReference type="GO" id="GO:0007520">
    <property type="term" value="P:myoblast fusion"/>
    <property type="evidence" value="ECO:0000266"/>
    <property type="project" value="RGD"/>
</dbReference>
<dbReference type="GO" id="GO:0030838">
    <property type="term" value="P:positive regulation of actin filament polymerization"/>
    <property type="evidence" value="ECO:0000266"/>
    <property type="project" value="RGD"/>
</dbReference>
<dbReference type="GO" id="GO:0007519">
    <property type="term" value="P:skeletal muscle tissue development"/>
    <property type="evidence" value="ECO:0000266"/>
    <property type="project" value="RGD"/>
</dbReference>
<dbReference type="GO" id="GO:0036060">
    <property type="term" value="P:slit diaphragm assembly"/>
    <property type="evidence" value="ECO:0000250"/>
    <property type="project" value="UniProtKB"/>
</dbReference>
<dbReference type="CDD" id="cd00063">
    <property type="entry name" value="FN3"/>
    <property type="match status" value="1"/>
</dbReference>
<dbReference type="CDD" id="cd00096">
    <property type="entry name" value="Ig"/>
    <property type="match status" value="1"/>
</dbReference>
<dbReference type="FunFam" id="2.60.40.10:FF:000405">
    <property type="entry name" value="nephrin isoform X1"/>
    <property type="match status" value="1"/>
</dbReference>
<dbReference type="FunFam" id="2.60.40.10:FF:000719">
    <property type="entry name" value="nephrin isoform X1"/>
    <property type="match status" value="1"/>
</dbReference>
<dbReference type="FunFam" id="2.60.40.10:FF:000853">
    <property type="entry name" value="NPHS1, nephrin"/>
    <property type="match status" value="1"/>
</dbReference>
<dbReference type="FunFam" id="2.60.40.10:FF:001122">
    <property type="entry name" value="NPHS1, nephrin"/>
    <property type="match status" value="1"/>
</dbReference>
<dbReference type="FunFam" id="2.60.40.10:FF:001339">
    <property type="entry name" value="NPHS1, nephrin"/>
    <property type="match status" value="1"/>
</dbReference>
<dbReference type="FunFam" id="2.60.40.10:FF:001740">
    <property type="entry name" value="NPHS1, nephrin"/>
    <property type="match status" value="1"/>
</dbReference>
<dbReference type="Gene3D" id="2.60.40.10">
    <property type="entry name" value="Immunoglobulins"/>
    <property type="match status" value="10"/>
</dbReference>
<dbReference type="InterPro" id="IPR013162">
    <property type="entry name" value="CD80_C2-set"/>
</dbReference>
<dbReference type="InterPro" id="IPR051275">
    <property type="entry name" value="Cell_adhesion_signaling"/>
</dbReference>
<dbReference type="InterPro" id="IPR003961">
    <property type="entry name" value="FN3_dom"/>
</dbReference>
<dbReference type="InterPro" id="IPR036116">
    <property type="entry name" value="FN3_sf"/>
</dbReference>
<dbReference type="InterPro" id="IPR007110">
    <property type="entry name" value="Ig-like_dom"/>
</dbReference>
<dbReference type="InterPro" id="IPR036179">
    <property type="entry name" value="Ig-like_dom_sf"/>
</dbReference>
<dbReference type="InterPro" id="IPR013783">
    <property type="entry name" value="Ig-like_fold"/>
</dbReference>
<dbReference type="InterPro" id="IPR013098">
    <property type="entry name" value="Ig_I-set"/>
</dbReference>
<dbReference type="InterPro" id="IPR003599">
    <property type="entry name" value="Ig_sub"/>
</dbReference>
<dbReference type="InterPro" id="IPR003598">
    <property type="entry name" value="Ig_sub2"/>
</dbReference>
<dbReference type="PANTHER" id="PTHR11640">
    <property type="entry name" value="NEPHRIN"/>
    <property type="match status" value="1"/>
</dbReference>
<dbReference type="Pfam" id="PF08205">
    <property type="entry name" value="C2-set_2"/>
    <property type="match status" value="4"/>
</dbReference>
<dbReference type="Pfam" id="PF00041">
    <property type="entry name" value="fn3"/>
    <property type="match status" value="1"/>
</dbReference>
<dbReference type="Pfam" id="PF07679">
    <property type="entry name" value="I-set"/>
    <property type="match status" value="2"/>
</dbReference>
<dbReference type="Pfam" id="PF13927">
    <property type="entry name" value="Ig_3"/>
    <property type="match status" value="1"/>
</dbReference>
<dbReference type="SMART" id="SM00060">
    <property type="entry name" value="FN3"/>
    <property type="match status" value="1"/>
</dbReference>
<dbReference type="SMART" id="SM00409">
    <property type="entry name" value="IG"/>
    <property type="match status" value="8"/>
</dbReference>
<dbReference type="SMART" id="SM00408">
    <property type="entry name" value="IGc2"/>
    <property type="match status" value="7"/>
</dbReference>
<dbReference type="SUPFAM" id="SSF49265">
    <property type="entry name" value="Fibronectin type III"/>
    <property type="match status" value="1"/>
</dbReference>
<dbReference type="SUPFAM" id="SSF48726">
    <property type="entry name" value="Immunoglobulin"/>
    <property type="match status" value="9"/>
</dbReference>
<dbReference type="PROSITE" id="PS50853">
    <property type="entry name" value="FN3"/>
    <property type="match status" value="1"/>
</dbReference>
<dbReference type="PROSITE" id="PS50835">
    <property type="entry name" value="IG_LIKE"/>
    <property type="match status" value="7"/>
</dbReference>
<accession>Q9R044</accession>
<accession>Q9JIX2</accession>
<accession>Q9QXX7</accession>
<reference key="1">
    <citation type="journal article" date="2000" name="J. Am. Soc. Nephrol.">
        <title>Primary structure of mouse and rat nephrin cDNA and structure and expression of the mouse gene.</title>
        <authorList>
            <person name="Putaala H."/>
            <person name="Sainio K."/>
            <person name="Sariola H."/>
            <person name="Tryggvason K."/>
        </authorList>
    </citation>
    <scope>NUCLEOTIDE SEQUENCE [MRNA] (ISOFORM 1)</scope>
    <source>
        <tissue>Kidney</tissue>
    </source>
</reference>
<reference key="2">
    <citation type="journal article" date="2000" name="Kidney Int.">
        <title>Cloning of rat nephrin: expression in developing glomeruli and in proteinuric states.</title>
        <authorList>
            <person name="Kawachi H."/>
            <person name="Koike H."/>
            <person name="Kurihara H."/>
            <person name="Yaoita E."/>
            <person name="Orikasa M."/>
            <person name="Shia M.A."/>
            <person name="Sakai T."/>
            <person name="Yamamoto T."/>
            <person name="Salant D.J."/>
            <person name="Shimizu F."/>
        </authorList>
    </citation>
    <scope>NUCLEOTIDE SEQUENCE [MRNA] (ISOFORM 1)</scope>
    <scope>SUBCELLULAR LOCATION</scope>
    <source>
        <strain>Wistar</strain>
        <tissue>Renal glomerulus</tissue>
    </source>
</reference>
<reference key="3">
    <citation type="journal article" date="1999" name="Am. J. Pathol.">
        <title>Cloning and expression of the rat nephrin homolog.</title>
        <authorList>
            <person name="Ahola H."/>
            <person name="Wang S.-X."/>
            <person name="Luimula P."/>
            <person name="Solin M.-L."/>
            <person name="Holzman L.B."/>
            <person name="Holthoefer H."/>
        </authorList>
    </citation>
    <scope>NUCLEOTIDE SEQUENCE [MRNA] OF 19-1252 (ISOFORMS 1; 2 AND 3)</scope>
    <scope>FUNCTION</scope>
    <scope>TISSUE SPECIFICITY</scope>
    <source>
        <strain>Sprague-Dawley</strain>
        <tissue>Renal glomerulus</tissue>
    </source>
</reference>
<reference key="4">
    <citation type="journal article" date="2000" name="Kidney Int.">
        <title>Nephrin in experimental glomerular disease.</title>
        <authorList>
            <person name="Luimula P."/>
            <person name="Ahola H."/>
            <person name="Wang S.X."/>
            <person name="Solin M.L."/>
            <person name="Aaltonen P."/>
            <person name="Tikkanen I."/>
            <person name="Kerjaschki D."/>
            <person name="Holthofer H."/>
        </authorList>
    </citation>
    <scope>INDUCTION</scope>
    <scope>TISSUE SPECIFICITY</scope>
    <source>
        <strain>Sprague-Dawley</strain>
        <tissue>Kidney</tissue>
    </source>
</reference>
<reference key="5">
    <citation type="journal article" date="2002" name="Am. J. Physiol.">
        <title>Podocyte slit-diaphragm protein nephrin is linked to the actin cytoskeleton.</title>
        <authorList>
            <person name="Yuan H."/>
            <person name="Takeuchi E."/>
            <person name="Salant D.J."/>
        </authorList>
    </citation>
    <scope>FUNCTION</scope>
</reference>
<reference key="6">
    <citation type="journal article" date="2005" name="Lab. Invest.">
        <title>MAGI-1 is a component of the glomerular slit diaphragm that is tightly associated with nephrin.</title>
        <authorList>
            <person name="Hirabayashi S."/>
            <person name="Mori H."/>
            <person name="Kansaku A."/>
            <person name="Kurihara H."/>
            <person name="Sakai T."/>
            <person name="Shimizu F."/>
            <person name="Kawachi H."/>
            <person name="Hata Y."/>
        </authorList>
    </citation>
    <scope>INTERACTION WITH MAGI1</scope>
</reference>
<reference key="7">
    <citation type="journal article" date="2005" name="Proc. Natl. Acad. Sci. U.S.A.">
        <title>Cell junction-associated proteins IQGAP1, MAGI-2, CASK, spectrins, and alpha-actinin are components of the nephrin multiprotein complex.</title>
        <authorList>
            <person name="Lehtonen S."/>
            <person name="Ryan J.J."/>
            <person name="Kudlicka K."/>
            <person name="Iino N."/>
            <person name="Zhou H."/>
            <person name="Farquhar M.G."/>
        </authorList>
    </citation>
    <scope>INTERACTION WITH ACTN4; CASK; IQGAP1; MAGI2; SPTAN1 AND SPTBN1</scope>
    <source>
        <strain>Sprague-Dawley</strain>
        <tissue>Renal glomerulus</tissue>
    </source>
</reference>
<reference key="8">
    <citation type="journal article" date="2007" name="Proc. Natl. Acad. Sci. U.S.A.">
        <title>Nuclear relocation of the nephrin and CD2AP-binding protein dendrin promotes apoptosis of podocytes.</title>
        <authorList>
            <person name="Asanuma K."/>
            <person name="Campbell K.N."/>
            <person name="Kim K."/>
            <person name="Faul C."/>
            <person name="Mundel P."/>
        </authorList>
    </citation>
    <scope>INTERACTION WITH DDN</scope>
</reference>
<reference key="9">
    <citation type="journal article" date="2009" name="J. Biol. Chem.">
        <title>Phosphorylation of nephrin triggers Ca2+ signaling by recruitment and activation of phospholipase C-{gamma}1.</title>
        <authorList>
            <person name="Harita Y."/>
            <person name="Kurihara H."/>
            <person name="Kosako H."/>
            <person name="Tezuka T."/>
            <person name="Sekine T."/>
            <person name="Igarashi T."/>
            <person name="Ohsawa I."/>
            <person name="Ohta S."/>
            <person name="Hattori S."/>
        </authorList>
    </citation>
    <scope>PHOSPHORYLATION AT TYR-1204 BY FYN</scope>
</reference>
<reference key="10">
    <citation type="journal article" date="2012" name="Nat. Commun.">
        <title>Quantitative maps of protein phosphorylation sites across 14 different rat organs and tissues.</title>
        <authorList>
            <person name="Lundby A."/>
            <person name="Secher A."/>
            <person name="Lage K."/>
            <person name="Nordsborg N.B."/>
            <person name="Dmytriyev A."/>
            <person name="Lundby C."/>
            <person name="Olsen J.V."/>
        </authorList>
    </citation>
    <scope>PHOSPHORYLATION [LARGE SCALE ANALYSIS] AT SER-1112; THR-1115 AND SER-1119</scope>
    <scope>IDENTIFICATION BY MASS SPECTROMETRY [LARGE SCALE ANALYSIS]</scope>
</reference>
<sequence length="1252" mass="136281">MGAKRVTVRGARTSPIHRMSSLTPLLLMGMLTSGLAESPVPTSAPRGFWALSENLTAVEGTTVKLWCGVRAPGSVVQWAKDGLLLGPNPKMPGFPRYSLEGDRAKGEFHLLIEACDLSDDAEYECQVGRSELGPELVSPKVILSILVSPKVLLLTPEAGSTVTWVAGQEYVVTCVSGDAKPAPDITFIQSGRTILDVSSNVNEGSEEKLCITEAEARVIPQSSDNGQLLVCEGSNPALDTPIKASFTMNILFPPGPPVIDWPGLNEGHVRAGENLELPCTARGGNPPATLQWLKNGKPVSTAWGTEHAQAVAHSVLVMTVRPEDHGARLSCQSYNSVSAGTQERSITLQVTFPPSAITILGSVSQSENKNVTLCCLTKSSRPRVLLRWWLGGRQLLPTDETVMDGLHGGHISMSNLTFLVRREDNGLPLTCEAFSDAFSKETFKKSLTLNVKYPAQKLWIEGPPEGQYIRTGTRVRLVCLAIGGNPDPSLIWFKDSRPVSEPRQPQEPRRVQLGSVEKSGSTFSRELVLIIGPPDNRAKFSCKAGQLSASTQLVVQFPPTNLTILANSSALRPGDALNLTCVSISSNPPVNLSWDKEGERLEDVAAKPQSAPFKGSAASRSVFLRVSSRDHGQRVTCRAHSEALRETVSSFYRFNVLYPPEFLGEQVRAVTVVEQGQVLLPVSVSANPAPEAFNWTFRGYRLSPAGGPRHRILSGGALQLWNVTRADDGFYQLHCQNSEGTAEALLKLDVHYAPTIRALRDPTEVNVGGSVDIVCTVDANPILPEMFSWERLGEEEEDLNLDDMEKVSKGSTGRLRIRQAKLSQAGAYQCIVDNGVAPAARGLVRLVVRFAPQVDQPTPLTKVAAAGDSTSSATLHCRARGVPNIDFTWTKNGVPLDLQDPRYTEHRYHQGVVHSSLLTIANVSAAQDYALFKCTATNALGSDHTNIQLVSISRPDPPLGLKVVSISPHSVGLEWKPGFDGGLPQRFQIRYEALETPGFLHVDVLPTQATTFTLTGLKPSTRYRIWLLASNALGDSGLTDKGIQVSVTTPGPDQAPEDTDHQLPTELPPGPPRLPLLPVLFAVGGLLLLSNASCVGGLLWRRRLRRLAEEISEKTEAGSEDRIRNEYEESQWTGDRDTRSSTVSTAEVDPNYYSMRDFSPQLPPTLEEVLYHQGAEGEDMAFPGHLHDEVERAYGPPGAWGPLYDEVRMDPYDLRWPEVQCEDPRGIYDQVAADMDAVEASSLPFELRGHLV</sequence>
<proteinExistence type="evidence at protein level"/>
<feature type="signal peptide" evidence="3">
    <location>
        <begin position="1"/>
        <end position="35"/>
    </location>
</feature>
<feature type="chain" id="PRO_0000015054" description="Nephrin">
    <location>
        <begin position="36"/>
        <end position="1252"/>
    </location>
</feature>
<feature type="topological domain" description="Extracellular" evidence="3">
    <location>
        <begin position="36"/>
        <end position="1078"/>
    </location>
</feature>
<feature type="transmembrane region" description="Helical" evidence="3">
    <location>
        <begin position="1079"/>
        <end position="1099"/>
    </location>
</feature>
<feature type="topological domain" description="Cytoplasmic" evidence="3">
    <location>
        <begin position="1100"/>
        <end position="1252"/>
    </location>
</feature>
<feature type="domain" description="Ig-like C2-type 1">
    <location>
        <begin position="39"/>
        <end position="144"/>
    </location>
</feature>
<feature type="domain" description="Ig-like C2-type 2">
    <location>
        <begin position="149"/>
        <end position="247"/>
    </location>
</feature>
<feature type="domain" description="Ig-like C2-type 3">
    <location>
        <begin position="256"/>
        <end position="347"/>
    </location>
</feature>
<feature type="domain" description="Ig-like C2-type 4">
    <location>
        <begin position="354"/>
        <end position="448"/>
    </location>
</feature>
<feature type="domain" description="Ig-like C2-type 5">
    <location>
        <begin position="454"/>
        <end position="554"/>
    </location>
</feature>
<feature type="domain" description="Ig-like C2-type 6">
    <location>
        <begin position="558"/>
        <end position="649"/>
    </location>
</feature>
<feature type="domain" description="Ig-like C2-type 7">
    <location>
        <begin position="754"/>
        <end position="846"/>
    </location>
</feature>
<feature type="domain" description="Ig-like C2-type 8">
    <location>
        <begin position="852"/>
        <end position="953"/>
    </location>
</feature>
<feature type="domain" description="Fibronectin type-III" evidence="5">
    <location>
        <begin position="957"/>
        <end position="1052"/>
    </location>
</feature>
<feature type="region of interest" description="Disordered" evidence="6">
    <location>
        <begin position="1043"/>
        <end position="1067"/>
    </location>
</feature>
<feature type="region of interest" description="Disordered" evidence="6">
    <location>
        <begin position="1113"/>
        <end position="1144"/>
    </location>
</feature>
<feature type="compositionally biased region" description="Basic and acidic residues" evidence="6">
    <location>
        <begin position="1113"/>
        <end position="1127"/>
    </location>
</feature>
<feature type="modified residue" description="Phosphoserine" evidence="1">
    <location>
        <position position="446"/>
    </location>
</feature>
<feature type="modified residue" description="Phosphoserine" evidence="17">
    <location>
        <position position="1112"/>
    </location>
</feature>
<feature type="modified residue" description="Phosphothreonine" evidence="17">
    <location>
        <position position="1115"/>
    </location>
</feature>
<feature type="modified residue" description="Phosphoserine" evidence="17">
    <location>
        <position position="1119"/>
    </location>
</feature>
<feature type="modified residue" description="Phosphotyrosine; by FYN" evidence="14">
    <location>
        <position position="1204"/>
    </location>
</feature>
<feature type="glycosylation site" description="N-linked (GlcNAc...) asparagine" evidence="3">
    <location>
        <position position="54"/>
    </location>
</feature>
<feature type="glycosylation site" description="N-linked (GlcNAc...) asparagine" evidence="3">
    <location>
        <position position="370"/>
    </location>
</feature>
<feature type="glycosylation site" description="N-linked (GlcNAc...) asparagine" evidence="3">
    <location>
        <position position="561"/>
    </location>
</feature>
<feature type="glycosylation site" description="N-linked (GlcNAc...) asparagine" evidence="3">
    <location>
        <position position="578"/>
    </location>
</feature>
<feature type="glycosylation site" description="N-linked (GlcNAc...) asparagine" evidence="3">
    <location>
        <position position="591"/>
    </location>
</feature>
<feature type="glycosylation site" description="N-linked (GlcNAc...) asparagine" evidence="3">
    <location>
        <position position="722"/>
    </location>
</feature>
<feature type="disulfide bond" evidence="4">
    <location>
        <begin position="67"/>
        <end position="125"/>
    </location>
</feature>
<feature type="disulfide bond" evidence="4">
    <location>
        <begin position="174"/>
        <end position="231"/>
    </location>
</feature>
<feature type="disulfide bond" evidence="4">
    <location>
        <begin position="279"/>
        <end position="331"/>
    </location>
</feature>
<feature type="disulfide bond" evidence="4">
    <location>
        <begin position="375"/>
        <end position="431"/>
    </location>
</feature>
<feature type="disulfide bond" evidence="4">
    <location>
        <begin position="479"/>
        <end position="542"/>
    </location>
</feature>
<feature type="disulfide bond" evidence="4">
    <location>
        <begin position="581"/>
        <end position="637"/>
    </location>
</feature>
<feature type="disulfide bond" evidence="4">
    <location>
        <begin position="775"/>
        <end position="830"/>
    </location>
</feature>
<feature type="disulfide bond" evidence="4">
    <location>
        <begin position="877"/>
        <end position="934"/>
    </location>
</feature>
<feature type="splice variant" id="VSP_002600" description="In isoform 3." evidence="15">
    <location>
        <begin position="1070"/>
        <end position="1155"/>
    </location>
</feature>
<feature type="splice variant" id="VSP_002599" description="In isoform 2." evidence="15">
    <location>
        <begin position="1070"/>
        <end position="1082"/>
    </location>
</feature>
<feature type="sequence conflict" description="In Ref. 2; AAF14884." evidence="16" ref="2">
    <original>M</original>
    <variation>T</variation>
    <location>
        <position position="19"/>
    </location>
</feature>
<feature type="sequence conflict" description="In Ref. 2; AAF14884." evidence="16" ref="2">
    <original>R</original>
    <variation>Q</variation>
    <location>
        <position position="46"/>
    </location>
</feature>
<feature type="sequence conflict" description="In Ref. 3; AAF12734." evidence="16" ref="3">
    <original>D</original>
    <variation>N</variation>
    <location>
        <position position="1229"/>
    </location>
</feature>
<gene>
    <name type="primary">Nphs1</name>
    <name type="synonym">Nphn</name>
</gene>
<comment type="function">
    <text evidence="7 10">Seems to play a role in the development or function of the kidney glomerular filtration barrier. Regulates glomerular vascular permeability. May anchor the podocyte slit diaphragm to the actin cytoskeleton. Plays a role in skeletal muscle formation through regulation of myoblast fusion.</text>
</comment>
<comment type="subunit">
    <text evidence="1 2 11 12 13">Interacts with NPHS2 and with CD2AP (via C-terminal domain). Self-associates (via the Ig-like domains). Also interacts (via the Ig-like domains) with KIRREL1/NEPH1 and KIRREL2; the interaction with KIRREL1 is dependent on KIRREL1 glycosylation. Interacts with KIRREL3 (By similarity). Interacts with MAGI1 (via PDZ 2 and 3 domains) forming a tripartite complex with IGSF5/JAM4. Interacts with DDN; the interaction is direct. Forms a complex with ACTN4, CASK, IQGAP1, MAGI2, SPTAN1 and SPTBN1. Interacts with phosphatidylinositol 3-kinase regulatory subunit PIK3R1; the interaction is reduced by high glucose levels (By similarity).</text>
</comment>
<comment type="interaction">
    <interactant intactId="EBI-7945021">
        <id>Q9R044</id>
    </interactant>
    <interactant intactId="EBI-7945080">
        <id>P97710</id>
        <label>Sirpa</label>
    </interactant>
    <organismsDiffer>false</organismsDiffer>
    <experiments>2</experiments>
</comment>
<comment type="subcellular location">
    <subcellularLocation>
        <location evidence="16">Cell membrane</location>
        <topology evidence="16">Single-pass type I membrane protein</topology>
    </subcellularLocation>
    <text evidence="8">Located at podocyte slit diaphragm between podocyte foot processes.</text>
</comment>
<comment type="alternative products">
    <event type="alternative splicing"/>
    <isoform>
        <id>Q9R044-1</id>
        <name>1</name>
        <sequence type="displayed"/>
    </isoform>
    <isoform>
        <id>Q9R044-2</id>
        <name>2</name>
        <name>Alpha</name>
        <sequence type="described" ref="VSP_002599"/>
    </isoform>
    <isoform>
        <id>Q9R044-3</id>
        <name>3</name>
        <name>Beta</name>
        <sequence type="described" ref="VSP_002600"/>
    </isoform>
    <text>Experimental confirmation may be lacking for some isoforms.</text>
</comment>
<comment type="tissue specificity">
    <text evidence="7 9">Strongly expressed in the podocytes of kidney glomeruli (at protein level) and at lower levels in the spleen.</text>
</comment>
<comment type="induction">
    <text evidence="9">Following injection with puromycin which induces nephrosis, down-regulated by 40% 3 days post-injection and by 80% at day 10. Also down-regulated by HgCl2 with rapid decrease at day 3.</text>
</comment>
<comment type="PTM">
    <text evidence="1 14">Phosphorylated at Tyr-1204 by FYN, leading to the recruitment and activation of phospholipase C-gamma-1/PLCG1 (PubMed:19179337). Tyrosine phosphorylation is reduced by high glucose levels (By similarity). Dephosphorylated by tensin TNS2 which leads to reduced binding of NPHN1 to PIK3R1 (By similarity).</text>
</comment>
<comment type="similarity">
    <text evidence="16">Belongs to the immunoglobulin superfamily.</text>
</comment>
<name>NPHN_RAT</name>
<organism>
    <name type="scientific">Rattus norvegicus</name>
    <name type="common">Rat</name>
    <dbReference type="NCBI Taxonomy" id="10116"/>
    <lineage>
        <taxon>Eukaryota</taxon>
        <taxon>Metazoa</taxon>
        <taxon>Chordata</taxon>
        <taxon>Craniata</taxon>
        <taxon>Vertebrata</taxon>
        <taxon>Euteleostomi</taxon>
        <taxon>Mammalia</taxon>
        <taxon>Eutheria</taxon>
        <taxon>Euarchontoglires</taxon>
        <taxon>Glires</taxon>
        <taxon>Rodentia</taxon>
        <taxon>Myomorpha</taxon>
        <taxon>Muroidea</taxon>
        <taxon>Muridae</taxon>
        <taxon>Murinae</taxon>
        <taxon>Rattus</taxon>
    </lineage>
</organism>